<protein>
    <recommendedName>
        <fullName evidence="8">bZIP transcription factor 27</fullName>
        <shortName evidence="8">AtbZIP27</shortName>
    </recommendedName>
    <alternativeName>
        <fullName evidence="9">Protein FD PARALOG</fullName>
    </alternativeName>
</protein>
<name>FDP_ARATH</name>
<proteinExistence type="evidence at protein level"/>
<comment type="function">
    <text evidence="6">Transcription factor required for the transition to flowering promoted by FT.</text>
</comment>
<comment type="subunit">
    <text evidence="4 5 7">Self-interacts (PubMed:16099979). Interacts with FT and FD/BZIP14 (PubMed:16099979, PubMed:16099980). Interacts with CPK33 (PubMed:25661797).</text>
</comment>
<comment type="subcellular location">
    <subcellularLocation>
        <location evidence="2">Nucleus</location>
    </subcellularLocation>
</comment>
<comment type="alternative products">
    <event type="alternative splicing"/>
    <isoform>
        <id>Q7PCC6-1</id>
        <name>1</name>
        <sequence type="displayed"/>
    </isoform>
    <isoform>
        <id>Q7PCC6-2</id>
        <name>2</name>
        <sequence type="described" ref="VSP_057966"/>
    </isoform>
</comment>
<comment type="tissue specificity">
    <text evidence="6">Expressed on the flanks of the shoot apex.</text>
</comment>
<comment type="PTM">
    <text evidence="11">Phosphorylated (Probable).</text>
</comment>
<comment type="disruption phenotype">
    <text evidence="6">Slightly delayed flowering. In the plants missing both FD and FDP, fd-2 fdp-1 strongly delayed flowering, even in the presence of high FT levels.</text>
</comment>
<comment type="similarity">
    <text evidence="10">Belongs to the bZIP family.</text>
</comment>
<comment type="sequence caution" evidence="10">
    <conflict type="erroneous initiation">
        <sequence resource="EMBL-CDS" id="AEC06680"/>
    </conflict>
    <text>Truncated N-terminus.</text>
</comment>
<comment type="sequence caution" evidence="10">
    <conflict type="erroneous initiation">
        <sequence resource="EMBL-CDS" id="AEC06681"/>
    </conflict>
    <text>Truncated N-terminus.</text>
</comment>
<organism>
    <name type="scientific">Arabidopsis thaliana</name>
    <name type="common">Mouse-ear cress</name>
    <dbReference type="NCBI Taxonomy" id="3702"/>
    <lineage>
        <taxon>Eukaryota</taxon>
        <taxon>Viridiplantae</taxon>
        <taxon>Streptophyta</taxon>
        <taxon>Embryophyta</taxon>
        <taxon>Tracheophyta</taxon>
        <taxon>Spermatophyta</taxon>
        <taxon>Magnoliopsida</taxon>
        <taxon>eudicotyledons</taxon>
        <taxon>Gunneridae</taxon>
        <taxon>Pentapetalae</taxon>
        <taxon>rosids</taxon>
        <taxon>malvids</taxon>
        <taxon>Brassicales</taxon>
        <taxon>Brassicaceae</taxon>
        <taxon>Camelineae</taxon>
        <taxon>Arabidopsis</taxon>
    </lineage>
</organism>
<evidence type="ECO:0000250" key="1">
    <source>
        <dbReference type="UniProtKB" id="Q84JK2"/>
    </source>
</evidence>
<evidence type="ECO:0000255" key="2">
    <source>
        <dbReference type="PROSITE-ProRule" id="PRU00768"/>
    </source>
</evidence>
<evidence type="ECO:0000255" key="3">
    <source>
        <dbReference type="PROSITE-ProRule" id="PRU00978"/>
    </source>
</evidence>
<evidence type="ECO:0000269" key="4">
    <source>
    </source>
</evidence>
<evidence type="ECO:0000269" key="5">
    <source>
    </source>
</evidence>
<evidence type="ECO:0000269" key="6">
    <source>
    </source>
</evidence>
<evidence type="ECO:0000269" key="7">
    <source>
    </source>
</evidence>
<evidence type="ECO:0000303" key="8">
    <source>
    </source>
</evidence>
<evidence type="ECO:0000303" key="9">
    <source>
    </source>
</evidence>
<evidence type="ECO:0000305" key="10"/>
<evidence type="ECO:0000305" key="11">
    <source>
    </source>
</evidence>
<evidence type="ECO:0000312" key="12">
    <source>
        <dbReference type="EMBL" id="AEC06681.1"/>
    </source>
</evidence>
<sequence>MLSSAKHNKINNHSAFSISSSSSSLSTSSSLGHNKSQVTMEEVWKEINLGSLHYHRQLNIGHEPMLKNQNPNNSIFQDFLNMPLNQPPPPPPPPSSSTIVTALYGSLPLPPPATVLSLNSGVGFEFLDTTENLLASNPRSFEESAKFGCLGKKRGQDSDDTRGDRRYKRMIKNRESAARSRARKQAYTNELELEIAHLQTENARLKIQQEQLKIAEATQNQVKKTLQRSSTAPF</sequence>
<dbReference type="EMBL" id="BN000022">
    <property type="protein sequence ID" value="CAD29861.1"/>
    <property type="molecule type" value="Genomic_DNA"/>
</dbReference>
<dbReference type="EMBL" id="CP002685">
    <property type="protein sequence ID" value="AEC06680.1"/>
    <property type="status" value="ALT_INIT"/>
    <property type="molecule type" value="Genomic_DNA"/>
</dbReference>
<dbReference type="EMBL" id="CP002685">
    <property type="protein sequence ID" value="AEC06681.1"/>
    <property type="status" value="ALT_INIT"/>
    <property type="molecule type" value="Genomic_DNA"/>
</dbReference>
<dbReference type="EMBL" id="CP002685">
    <property type="protein sequence ID" value="ANM62850.1"/>
    <property type="molecule type" value="Genomic_DNA"/>
</dbReference>
<dbReference type="EMBL" id="BT029328">
    <property type="protein sequence ID" value="ABK32142.1"/>
    <property type="molecule type" value="mRNA"/>
</dbReference>
<dbReference type="RefSeq" id="NP_001189545.1">
    <property type="nucleotide sequence ID" value="NM_001202616.1"/>
</dbReference>
<dbReference type="RefSeq" id="NP_001324976.1">
    <molecule id="Q7PCC6-2"/>
    <property type="nucleotide sequence ID" value="NM_001335555.1"/>
</dbReference>
<dbReference type="RefSeq" id="NP_179368.1">
    <property type="nucleotide sequence ID" value="NM_127331.3"/>
</dbReference>
<dbReference type="SMR" id="Q7PCC6"/>
<dbReference type="FunCoup" id="Q7PCC6">
    <property type="interactions" value="355"/>
</dbReference>
<dbReference type="IntAct" id="Q7PCC6">
    <property type="interactions" value="5"/>
</dbReference>
<dbReference type="STRING" id="3702.Q7PCC6"/>
<dbReference type="PaxDb" id="3702-AT2G17770.2"/>
<dbReference type="EnsemblPlants" id="AT2G17770.3">
    <molecule id="Q7PCC6-2"/>
    <property type="protein sequence ID" value="AT2G17770.3"/>
    <property type="gene ID" value="AT2G17770"/>
</dbReference>
<dbReference type="GeneID" id="816286"/>
<dbReference type="Gramene" id="AT2G17770.3">
    <molecule id="Q7PCC6-2"/>
    <property type="protein sequence ID" value="AT2G17770.3"/>
    <property type="gene ID" value="AT2G17770"/>
</dbReference>
<dbReference type="KEGG" id="ath:AT2G17770"/>
<dbReference type="Araport" id="AT2G17770"/>
<dbReference type="TAIR" id="AT2G17770">
    <property type="gene designation" value="BZIP27"/>
</dbReference>
<dbReference type="eggNOG" id="ENOG502RZGX">
    <property type="taxonomic scope" value="Eukaryota"/>
</dbReference>
<dbReference type="InParanoid" id="Q7PCC6"/>
<dbReference type="PRO" id="PR:Q7PCC6"/>
<dbReference type="Proteomes" id="UP000006548">
    <property type="component" value="Chromosome 2"/>
</dbReference>
<dbReference type="ExpressionAtlas" id="Q7PCC6">
    <property type="expression patterns" value="baseline and differential"/>
</dbReference>
<dbReference type="GO" id="GO:0005634">
    <property type="term" value="C:nucleus"/>
    <property type="evidence" value="ECO:0007669"/>
    <property type="project" value="UniProtKB-SubCell"/>
</dbReference>
<dbReference type="GO" id="GO:0003677">
    <property type="term" value="F:DNA binding"/>
    <property type="evidence" value="ECO:0007669"/>
    <property type="project" value="UniProtKB-KW"/>
</dbReference>
<dbReference type="GO" id="GO:0003700">
    <property type="term" value="F:DNA-binding transcription factor activity"/>
    <property type="evidence" value="ECO:0000250"/>
    <property type="project" value="TAIR"/>
</dbReference>
<dbReference type="GO" id="GO:0045893">
    <property type="term" value="P:positive regulation of DNA-templated transcription"/>
    <property type="evidence" value="ECO:0007669"/>
    <property type="project" value="InterPro"/>
</dbReference>
<dbReference type="GO" id="GO:2000028">
    <property type="term" value="P:regulation of photoperiodism, flowering"/>
    <property type="evidence" value="ECO:0000315"/>
    <property type="project" value="UniProtKB"/>
</dbReference>
<dbReference type="CDD" id="cd14707">
    <property type="entry name" value="bZIP_plant_BZIP46"/>
    <property type="match status" value="1"/>
</dbReference>
<dbReference type="FunFam" id="1.20.5.170:FF:000036">
    <property type="entry name" value="ABSCISIC ACID-INSENSITIVE 5-like protein 2"/>
    <property type="match status" value="1"/>
</dbReference>
<dbReference type="Gene3D" id="1.20.5.170">
    <property type="match status" value="1"/>
</dbReference>
<dbReference type="InterPro" id="IPR004827">
    <property type="entry name" value="bZIP"/>
</dbReference>
<dbReference type="InterPro" id="IPR043452">
    <property type="entry name" value="BZIP46-like"/>
</dbReference>
<dbReference type="InterPro" id="IPR046347">
    <property type="entry name" value="bZIP_sf"/>
</dbReference>
<dbReference type="PANTHER" id="PTHR22952:SF484">
    <property type="entry name" value="BZIP TRANSCRIPTION FACTOR 27"/>
    <property type="match status" value="1"/>
</dbReference>
<dbReference type="PANTHER" id="PTHR22952">
    <property type="entry name" value="CAMP-RESPONSE ELEMENT BINDING PROTEIN-RELATED"/>
    <property type="match status" value="1"/>
</dbReference>
<dbReference type="Pfam" id="PF00170">
    <property type="entry name" value="bZIP_1"/>
    <property type="match status" value="1"/>
</dbReference>
<dbReference type="SMART" id="SM00338">
    <property type="entry name" value="BRLZ"/>
    <property type="match status" value="1"/>
</dbReference>
<dbReference type="SUPFAM" id="SSF57959">
    <property type="entry name" value="Leucine zipper domain"/>
    <property type="match status" value="1"/>
</dbReference>
<dbReference type="PROSITE" id="PS50217">
    <property type="entry name" value="BZIP"/>
    <property type="match status" value="1"/>
</dbReference>
<dbReference type="PROSITE" id="PS00036">
    <property type="entry name" value="BZIP_BASIC"/>
    <property type="match status" value="1"/>
</dbReference>
<gene>
    <name evidence="9" type="primary">FDP</name>
    <name evidence="8" type="synonym">BZIP27</name>
    <name evidence="12" type="ordered locus">At2g17770</name>
    <name evidence="10" type="ORF">T17A5.15</name>
</gene>
<keyword id="KW-0025">Alternative splicing</keyword>
<keyword id="KW-0238">DNA-binding</keyword>
<keyword id="KW-0539">Nucleus</keyword>
<keyword id="KW-0597">Phosphoprotein</keyword>
<keyword id="KW-1185">Reference proteome</keyword>
<keyword id="KW-0804">Transcription</keyword>
<keyword id="KW-0805">Transcription regulation</keyword>
<reference key="1">
    <citation type="journal article" date="2002" name="Plant Cell">
        <title>The homologous ABI5 and EEL transcription factors function antagonistically to fine-tune gene expression during late embryogenesis.</title>
        <authorList>
            <person name="Bensmihen S."/>
            <person name="Rippa S."/>
            <person name="Lambert G."/>
            <person name="Jublot D."/>
            <person name="Pautot V."/>
            <person name="Granier F."/>
            <person name="Giraudat J."/>
            <person name="Parcy F."/>
        </authorList>
    </citation>
    <scope>NUCLEOTIDE SEQUENCE [GENOMIC DNA]</scope>
</reference>
<reference key="2">
    <citation type="journal article" date="2017" name="Plant J.">
        <title>Araport11: a complete reannotation of the Arabidopsis thaliana reference genome.</title>
        <authorList>
            <person name="Cheng C.Y."/>
            <person name="Krishnakumar V."/>
            <person name="Chan A.P."/>
            <person name="Thibaud-Nissen F."/>
            <person name="Schobel S."/>
            <person name="Town C.D."/>
        </authorList>
    </citation>
    <scope>GENOME REANNOTATION</scope>
    <source>
        <strain>cv. Columbia</strain>
    </source>
</reference>
<reference key="3">
    <citation type="submission" date="2006-11" db="EMBL/GenBank/DDBJ databases">
        <title>Arabidopsis ORF Clones.</title>
        <authorList>
            <person name="Bautista V.R."/>
            <person name="Kim C.J."/>
            <person name="Chen H."/>
            <person name="Quinitio C."/>
            <person name="Ecker J.R."/>
        </authorList>
    </citation>
    <scope>NUCLEOTIDE SEQUENCE [LARGE SCALE MRNA] (ISOFORM 2)</scope>
    <source>
        <strain>cv. Columbia</strain>
    </source>
</reference>
<reference key="4">
    <citation type="journal article" date="2002" name="Trends Plant Sci.">
        <title>bZIP transcription factors in Arabidopsis.</title>
        <authorList>
            <person name="Jakoby M."/>
            <person name="Weisshaar B."/>
            <person name="Droege-Laser W."/>
            <person name="Vicente-Carbajosa J."/>
            <person name="Tiedemann J."/>
            <person name="Kroj T."/>
            <person name="Parcy F."/>
        </authorList>
    </citation>
    <scope>GENE FAMILY</scope>
    <scope>NOMENCLATURE</scope>
</reference>
<reference key="5">
    <citation type="journal article" date="2005" name="Science">
        <title>FD, a bZIP protein mediating signals from the floral pathway integrator FT at the shoot apex.</title>
        <authorList>
            <person name="Abe M."/>
            <person name="Kobayashi Y."/>
            <person name="Yamamoto S."/>
            <person name="Daimon Y."/>
            <person name="Yamaguchi A."/>
            <person name="Ikeda Y."/>
            <person name="Ichinoki H."/>
            <person name="Notaguchi M."/>
            <person name="Goto K."/>
            <person name="Araki T."/>
        </authorList>
    </citation>
    <scope>INTERACTION WITH FD/BZIP14 AND FT</scope>
    <scope>SUBUNIT</scope>
    <source>
        <strain>cv. Columbia</strain>
        <strain>cv. Landsberg erecta</strain>
    </source>
</reference>
<reference key="6">
    <citation type="journal article" date="2005" name="Science">
        <title>Integration of spatial and temporal information during floral induction in Arabidopsis.</title>
        <authorList>
            <person name="Wigge P.A."/>
            <person name="Kim M.C."/>
            <person name="Jaeger K.-E."/>
            <person name="Busch W."/>
            <person name="Schmid M."/>
            <person name="Lohmann J.U."/>
            <person name="Weigel D."/>
        </authorList>
    </citation>
    <scope>INTERACTION WITH FT</scope>
</reference>
<reference key="7">
    <citation type="journal article" date="2013" name="Plant Cell">
        <title>Interlocking feedback loops govern the dynamic behavior of the floral transition in Arabidopsis.</title>
        <authorList>
            <person name="Jaeger K.E."/>
            <person name="Pullen N."/>
            <person name="Lamzin S."/>
            <person name="Morris R.J."/>
            <person name="Wigge P.A."/>
        </authorList>
    </citation>
    <scope>FUNCTION</scope>
    <scope>DISRUPTION PHENOTYPE</scope>
    <scope>TISSUE SPECIFICITY</scope>
    <source>
        <strain>cv. Columbia</strain>
    </source>
</reference>
<reference key="8">
    <citation type="journal article" date="2015" name="Sci. Rep.">
        <title>Calcium-dependent protein kinases responsible for the phosphorylation of a bZIP transcription factor FD crucial for the florigen complex formation.</title>
        <authorList>
            <person name="Kawamoto N."/>
            <person name="Sasabe M."/>
            <person name="Endo M."/>
            <person name="Machida Y."/>
            <person name="Araki T."/>
        </authorList>
    </citation>
    <scope>INTERACTION WITH CPK33</scope>
</reference>
<feature type="chain" id="PRO_0000434614" description="bZIP transcription factor 27">
    <location>
        <begin position="1"/>
        <end position="234"/>
    </location>
</feature>
<feature type="domain" description="bZIP" evidence="3">
    <location>
        <begin position="163"/>
        <end position="213"/>
    </location>
</feature>
<feature type="region of interest" description="Basic motif" evidence="3">
    <location>
        <begin position="165"/>
        <end position="184"/>
    </location>
</feature>
<feature type="region of interest" description="Leucine-zipper" evidence="3">
    <location>
        <begin position="191"/>
        <end position="212"/>
    </location>
</feature>
<feature type="short sequence motif" description="Nuclear localization signal" evidence="2">
    <location>
        <begin position="152"/>
        <end position="159"/>
    </location>
</feature>
<feature type="modified residue" description="Phosphothreonine" evidence="1">
    <location>
        <position position="231"/>
    </location>
</feature>
<feature type="splice variant" id="VSP_057966" description="In isoform 2.">
    <original>AYTNELELEIAHLQTENARLKIQQEQLKIAEATQNQVKKTLQRSSTAP</original>
    <variation>ECVSPHSST</variation>
    <location>
        <begin position="186"/>
        <end position="233"/>
    </location>
</feature>
<accession>Q7PCC6</accession>
<accession>A0JPV8</accession>
<accession>F4IPG9</accession>